<keyword id="KW-0030">Aminoacyl-tRNA synthetase</keyword>
<keyword id="KW-0067">ATP-binding</keyword>
<keyword id="KW-0963">Cytoplasm</keyword>
<keyword id="KW-0436">Ligase</keyword>
<keyword id="KW-0479">Metal-binding</keyword>
<keyword id="KW-0547">Nucleotide-binding</keyword>
<keyword id="KW-0648">Protein biosynthesis</keyword>
<keyword id="KW-1185">Reference proteome</keyword>
<keyword id="KW-0694">RNA-binding</keyword>
<keyword id="KW-0820">tRNA-binding</keyword>
<keyword id="KW-0862">Zinc</keyword>
<feature type="chain" id="PRO_1000020468" description="Threonine--tRNA ligase">
    <location>
        <begin position="1"/>
        <end position="641"/>
    </location>
</feature>
<feature type="domain" description="TGS" evidence="2">
    <location>
        <begin position="1"/>
        <end position="61"/>
    </location>
</feature>
<feature type="region of interest" description="Catalytic" evidence="1">
    <location>
        <begin position="242"/>
        <end position="533"/>
    </location>
</feature>
<feature type="binding site" evidence="1">
    <location>
        <position position="333"/>
    </location>
    <ligand>
        <name>Zn(2+)</name>
        <dbReference type="ChEBI" id="CHEBI:29105"/>
    </ligand>
</feature>
<feature type="binding site" evidence="1">
    <location>
        <position position="384"/>
    </location>
    <ligand>
        <name>Zn(2+)</name>
        <dbReference type="ChEBI" id="CHEBI:29105"/>
    </ligand>
</feature>
<feature type="binding site" evidence="1">
    <location>
        <position position="510"/>
    </location>
    <ligand>
        <name>Zn(2+)</name>
        <dbReference type="ChEBI" id="CHEBI:29105"/>
    </ligand>
</feature>
<accession>Q46LV3</accession>
<reference key="1">
    <citation type="journal article" date="2007" name="PLoS Genet.">
        <title>Patterns and implications of gene gain and loss in the evolution of Prochlorococcus.</title>
        <authorList>
            <person name="Kettler G.C."/>
            <person name="Martiny A.C."/>
            <person name="Huang K."/>
            <person name="Zucker J."/>
            <person name="Coleman M.L."/>
            <person name="Rodrigue S."/>
            <person name="Chen F."/>
            <person name="Lapidus A."/>
            <person name="Ferriera S."/>
            <person name="Johnson J."/>
            <person name="Steglich C."/>
            <person name="Church G.M."/>
            <person name="Richardson P."/>
            <person name="Chisholm S.W."/>
        </authorList>
    </citation>
    <scope>NUCLEOTIDE SEQUENCE [LARGE SCALE GENOMIC DNA]</scope>
    <source>
        <strain>NATL2A</strain>
    </source>
</reference>
<gene>
    <name evidence="1" type="primary">thrS</name>
    <name type="ordered locus">PMN2A_0033</name>
</gene>
<name>SYT_PROMT</name>
<comment type="function">
    <text evidence="1">Catalyzes the attachment of threonine to tRNA(Thr) in a two-step reaction: L-threonine is first activated by ATP to form Thr-AMP and then transferred to the acceptor end of tRNA(Thr). Also edits incorrectly charged L-seryl-tRNA(Thr).</text>
</comment>
<comment type="catalytic activity">
    <reaction evidence="1">
        <text>tRNA(Thr) + L-threonine + ATP = L-threonyl-tRNA(Thr) + AMP + diphosphate + H(+)</text>
        <dbReference type="Rhea" id="RHEA:24624"/>
        <dbReference type="Rhea" id="RHEA-COMP:9670"/>
        <dbReference type="Rhea" id="RHEA-COMP:9704"/>
        <dbReference type="ChEBI" id="CHEBI:15378"/>
        <dbReference type="ChEBI" id="CHEBI:30616"/>
        <dbReference type="ChEBI" id="CHEBI:33019"/>
        <dbReference type="ChEBI" id="CHEBI:57926"/>
        <dbReference type="ChEBI" id="CHEBI:78442"/>
        <dbReference type="ChEBI" id="CHEBI:78534"/>
        <dbReference type="ChEBI" id="CHEBI:456215"/>
        <dbReference type="EC" id="6.1.1.3"/>
    </reaction>
</comment>
<comment type="cofactor">
    <cofactor evidence="1">
        <name>Zn(2+)</name>
        <dbReference type="ChEBI" id="CHEBI:29105"/>
    </cofactor>
    <text evidence="1">Binds 1 zinc ion per subunit.</text>
</comment>
<comment type="subunit">
    <text evidence="1">Homodimer.</text>
</comment>
<comment type="subcellular location">
    <subcellularLocation>
        <location evidence="1">Cytoplasm</location>
    </subcellularLocation>
</comment>
<comment type="similarity">
    <text evidence="1">Belongs to the class-II aminoacyl-tRNA synthetase family.</text>
</comment>
<dbReference type="EC" id="6.1.1.3" evidence="1"/>
<dbReference type="EMBL" id="CP000095">
    <property type="protein sequence ID" value="AAZ57525.1"/>
    <property type="molecule type" value="Genomic_DNA"/>
</dbReference>
<dbReference type="RefSeq" id="WP_011293567.1">
    <property type="nucleotide sequence ID" value="NC_007335.2"/>
</dbReference>
<dbReference type="SMR" id="Q46LV3"/>
<dbReference type="STRING" id="59920.PMN2A_0033"/>
<dbReference type="KEGG" id="pmn:PMN2A_0033"/>
<dbReference type="HOGENOM" id="CLU_008554_0_1_3"/>
<dbReference type="OrthoDB" id="9802304at2"/>
<dbReference type="PhylomeDB" id="Q46LV3"/>
<dbReference type="Proteomes" id="UP000002535">
    <property type="component" value="Chromosome"/>
</dbReference>
<dbReference type="GO" id="GO:0005829">
    <property type="term" value="C:cytosol"/>
    <property type="evidence" value="ECO:0007669"/>
    <property type="project" value="TreeGrafter"/>
</dbReference>
<dbReference type="GO" id="GO:0005524">
    <property type="term" value="F:ATP binding"/>
    <property type="evidence" value="ECO:0007669"/>
    <property type="project" value="UniProtKB-UniRule"/>
</dbReference>
<dbReference type="GO" id="GO:0046872">
    <property type="term" value="F:metal ion binding"/>
    <property type="evidence" value="ECO:0007669"/>
    <property type="project" value="UniProtKB-KW"/>
</dbReference>
<dbReference type="GO" id="GO:0004829">
    <property type="term" value="F:threonine-tRNA ligase activity"/>
    <property type="evidence" value="ECO:0007669"/>
    <property type="project" value="UniProtKB-UniRule"/>
</dbReference>
<dbReference type="GO" id="GO:0000049">
    <property type="term" value="F:tRNA binding"/>
    <property type="evidence" value="ECO:0007669"/>
    <property type="project" value="UniProtKB-KW"/>
</dbReference>
<dbReference type="GO" id="GO:0006435">
    <property type="term" value="P:threonyl-tRNA aminoacylation"/>
    <property type="evidence" value="ECO:0007669"/>
    <property type="project" value="UniProtKB-UniRule"/>
</dbReference>
<dbReference type="CDD" id="cd01667">
    <property type="entry name" value="TGS_ThrRS"/>
    <property type="match status" value="1"/>
</dbReference>
<dbReference type="CDD" id="cd00860">
    <property type="entry name" value="ThrRS_anticodon"/>
    <property type="match status" value="1"/>
</dbReference>
<dbReference type="CDD" id="cd00771">
    <property type="entry name" value="ThrRS_core"/>
    <property type="match status" value="1"/>
</dbReference>
<dbReference type="FunFam" id="3.10.20.30:FF:000005">
    <property type="entry name" value="Threonine--tRNA ligase"/>
    <property type="match status" value="1"/>
</dbReference>
<dbReference type="FunFam" id="3.30.54.20:FF:000002">
    <property type="entry name" value="Threonine--tRNA ligase"/>
    <property type="match status" value="1"/>
</dbReference>
<dbReference type="FunFam" id="3.30.930.10:FF:000002">
    <property type="entry name" value="Threonine--tRNA ligase"/>
    <property type="match status" value="1"/>
</dbReference>
<dbReference type="FunFam" id="3.40.50.800:FF:000001">
    <property type="entry name" value="Threonine--tRNA ligase"/>
    <property type="match status" value="1"/>
</dbReference>
<dbReference type="FunFam" id="3.30.980.10:FF:000005">
    <property type="entry name" value="Threonyl-tRNA synthetase, mitochondrial"/>
    <property type="match status" value="1"/>
</dbReference>
<dbReference type="Gene3D" id="3.10.20.30">
    <property type="match status" value="1"/>
</dbReference>
<dbReference type="Gene3D" id="3.30.54.20">
    <property type="match status" value="1"/>
</dbReference>
<dbReference type="Gene3D" id="3.40.50.800">
    <property type="entry name" value="Anticodon-binding domain"/>
    <property type="match status" value="1"/>
</dbReference>
<dbReference type="Gene3D" id="3.30.930.10">
    <property type="entry name" value="Bira Bifunctional Protein, Domain 2"/>
    <property type="match status" value="1"/>
</dbReference>
<dbReference type="Gene3D" id="3.30.980.10">
    <property type="entry name" value="Threonyl-trna Synthetase, Chain A, domain 2"/>
    <property type="match status" value="1"/>
</dbReference>
<dbReference type="HAMAP" id="MF_00184">
    <property type="entry name" value="Thr_tRNA_synth"/>
    <property type="match status" value="1"/>
</dbReference>
<dbReference type="InterPro" id="IPR002314">
    <property type="entry name" value="aa-tRNA-synt_IIb"/>
</dbReference>
<dbReference type="InterPro" id="IPR006195">
    <property type="entry name" value="aa-tRNA-synth_II"/>
</dbReference>
<dbReference type="InterPro" id="IPR045864">
    <property type="entry name" value="aa-tRNA-synth_II/BPL/LPL"/>
</dbReference>
<dbReference type="InterPro" id="IPR004154">
    <property type="entry name" value="Anticodon-bd"/>
</dbReference>
<dbReference type="InterPro" id="IPR036621">
    <property type="entry name" value="Anticodon-bd_dom_sf"/>
</dbReference>
<dbReference type="InterPro" id="IPR012675">
    <property type="entry name" value="Beta-grasp_dom_sf"/>
</dbReference>
<dbReference type="InterPro" id="IPR004095">
    <property type="entry name" value="TGS"/>
</dbReference>
<dbReference type="InterPro" id="IPR012676">
    <property type="entry name" value="TGS-like"/>
</dbReference>
<dbReference type="InterPro" id="IPR002320">
    <property type="entry name" value="Thr-tRNA-ligase_IIa"/>
</dbReference>
<dbReference type="InterPro" id="IPR018163">
    <property type="entry name" value="Thr/Ala-tRNA-synth_IIc_edit"/>
</dbReference>
<dbReference type="InterPro" id="IPR047246">
    <property type="entry name" value="ThrRS_anticodon"/>
</dbReference>
<dbReference type="InterPro" id="IPR033728">
    <property type="entry name" value="ThrRS_core"/>
</dbReference>
<dbReference type="InterPro" id="IPR012947">
    <property type="entry name" value="tRNA_SAD"/>
</dbReference>
<dbReference type="NCBIfam" id="TIGR00418">
    <property type="entry name" value="thrS"/>
    <property type="match status" value="1"/>
</dbReference>
<dbReference type="PANTHER" id="PTHR11451:SF44">
    <property type="entry name" value="THREONINE--TRNA LIGASE, CHLOROPLASTIC_MITOCHONDRIAL 2"/>
    <property type="match status" value="1"/>
</dbReference>
<dbReference type="PANTHER" id="PTHR11451">
    <property type="entry name" value="THREONINE-TRNA LIGASE"/>
    <property type="match status" value="1"/>
</dbReference>
<dbReference type="Pfam" id="PF03129">
    <property type="entry name" value="HGTP_anticodon"/>
    <property type="match status" value="1"/>
</dbReference>
<dbReference type="Pfam" id="PF02824">
    <property type="entry name" value="TGS"/>
    <property type="match status" value="1"/>
</dbReference>
<dbReference type="Pfam" id="PF00587">
    <property type="entry name" value="tRNA-synt_2b"/>
    <property type="match status" value="1"/>
</dbReference>
<dbReference type="Pfam" id="PF07973">
    <property type="entry name" value="tRNA_SAD"/>
    <property type="match status" value="1"/>
</dbReference>
<dbReference type="PRINTS" id="PR01047">
    <property type="entry name" value="TRNASYNTHTHR"/>
</dbReference>
<dbReference type="SMART" id="SM00863">
    <property type="entry name" value="tRNA_SAD"/>
    <property type="match status" value="1"/>
</dbReference>
<dbReference type="SUPFAM" id="SSF52954">
    <property type="entry name" value="Class II aaRS ABD-related"/>
    <property type="match status" value="1"/>
</dbReference>
<dbReference type="SUPFAM" id="SSF55681">
    <property type="entry name" value="Class II aaRS and biotin synthetases"/>
    <property type="match status" value="1"/>
</dbReference>
<dbReference type="SUPFAM" id="SSF81271">
    <property type="entry name" value="TGS-like"/>
    <property type="match status" value="1"/>
</dbReference>
<dbReference type="SUPFAM" id="SSF55186">
    <property type="entry name" value="ThrRS/AlaRS common domain"/>
    <property type="match status" value="1"/>
</dbReference>
<dbReference type="PROSITE" id="PS50862">
    <property type="entry name" value="AA_TRNA_LIGASE_II"/>
    <property type="match status" value="1"/>
</dbReference>
<dbReference type="PROSITE" id="PS51880">
    <property type="entry name" value="TGS"/>
    <property type="match status" value="1"/>
</dbReference>
<protein>
    <recommendedName>
        <fullName evidence="1">Threonine--tRNA ligase</fullName>
        <ecNumber evidence="1">6.1.1.3</ecNumber>
    </recommendedName>
    <alternativeName>
        <fullName evidence="1">Threonyl-tRNA synthetase</fullName>
        <shortName evidence="1">ThrRS</shortName>
    </alternativeName>
</protein>
<evidence type="ECO:0000255" key="1">
    <source>
        <dbReference type="HAMAP-Rule" id="MF_00184"/>
    </source>
</evidence>
<evidence type="ECO:0000255" key="2">
    <source>
        <dbReference type="PROSITE-ProRule" id="PRU01228"/>
    </source>
</evidence>
<proteinExistence type="inferred from homology"/>
<sequence>MPIITLPDGTEKKYDSAVTIDQIASEIGPGLAKAALAGRVNGELIDTCIPITQNSHIQIITSKDDEGLEIIRHSFAHLLGHAVKQLYPEAKMAIGPVIEDGFYYDISYKDTFTPDDLLKIEKRMKELVNRDYSVGVEIVSPEKAKEVFTDRGEIFKLDIVKNIPKNEIIKLYKHQEYIDMCRGPHVPNTRHLRAFKLMKVSGAYWRGDSNNEMLQRIYGTAWKSSKELKEYLSRIEEAEKRDHRKLGKKYSLFHSQEEAPGMVFWHPKGWTIYRILEDFIRETITKYDYQEVKSPQVVDRSLWEKSGHWDKFKEDMFTTTSENREYAIKPMNCPCHIQIFNQGLKSYRDLPIRLSEFGSCHRNEPSGALHGLMRVRNFVQDDAHIFCTDEQIQEEVQNFIDLVFEVYKTFGFDSILIKLSTRPVKRVGSDDIWDKSEKALSEALDSKGLDWSLLPGEGAFYGPKIEFSLKDCLNRVWQCGTIQVDFSMPQRLNASYIDITGRKQTPVMLHRAILGSFERFIGILIENYSGNFPTWLSPIQIMIMGITDRNNEACFTAKDKLVDFGFRAEIDIRNEKVGFKIREHTMQRIPFLIIIGDKEEENSEISVRTREGKDLGNMSIDKFKLIIDESISKKGIQGNQS</sequence>
<organism>
    <name type="scientific">Prochlorococcus marinus (strain NATL2A)</name>
    <dbReference type="NCBI Taxonomy" id="59920"/>
    <lineage>
        <taxon>Bacteria</taxon>
        <taxon>Bacillati</taxon>
        <taxon>Cyanobacteriota</taxon>
        <taxon>Cyanophyceae</taxon>
        <taxon>Synechococcales</taxon>
        <taxon>Prochlorococcaceae</taxon>
        <taxon>Prochlorococcus</taxon>
    </lineage>
</organism>